<sequence length="255" mass="27166">MPLAKRIIPCLDVCNGRVVKGTKFVDIKDAGDPVEVAKRYDFECADEITFLDITASIEGRDTMIHMVEAIAEQVFIPLTVGGGIRKAVDVRAMLNAGADKVAINSAAIFNPNLINQLSEEFGSQCIVIAIDAKKVSDNKWEIFTHGGRKSTGIDAIEWAVKMTKGDNGAGEVLLTSMDCDGVKTGFDLLLTKAASDAVDVPIIASGGVGNLEHLSEGVLQGGADAVLAASIFHFGEYTIQQAKQAMQENGIEVRL</sequence>
<evidence type="ECO:0000255" key="1">
    <source>
        <dbReference type="HAMAP-Rule" id="MF_01013"/>
    </source>
</evidence>
<gene>
    <name evidence="1" type="primary">hisF</name>
    <name type="ordered locus">Rmag_0028</name>
</gene>
<reference key="1">
    <citation type="journal article" date="2007" name="Science">
        <title>The Calyptogena magnifica chemoautotrophic symbiont genome.</title>
        <authorList>
            <person name="Newton I.L.G."/>
            <person name="Woyke T."/>
            <person name="Auchtung T.A."/>
            <person name="Dilly G.F."/>
            <person name="Dutton R.J."/>
            <person name="Fisher M.C."/>
            <person name="Fontanez K.M."/>
            <person name="Lau E."/>
            <person name="Stewart F.J."/>
            <person name="Richardson P.M."/>
            <person name="Barry K.W."/>
            <person name="Saunders E."/>
            <person name="Detter J.C."/>
            <person name="Wu D."/>
            <person name="Eisen J.A."/>
            <person name="Cavanaugh C.M."/>
        </authorList>
    </citation>
    <scope>NUCLEOTIDE SEQUENCE [LARGE SCALE GENOMIC DNA]</scope>
</reference>
<dbReference type="EC" id="4.3.2.10" evidence="1"/>
<dbReference type="EMBL" id="CP000488">
    <property type="protein sequence ID" value="ABL01831.1"/>
    <property type="molecule type" value="Genomic_DNA"/>
</dbReference>
<dbReference type="RefSeq" id="WP_011737457.1">
    <property type="nucleotide sequence ID" value="NC_008610.1"/>
</dbReference>
<dbReference type="SMR" id="A1AV74"/>
<dbReference type="STRING" id="413404.Rmag_0028"/>
<dbReference type="KEGG" id="rma:Rmag_0028"/>
<dbReference type="eggNOG" id="COG0107">
    <property type="taxonomic scope" value="Bacteria"/>
</dbReference>
<dbReference type="HOGENOM" id="CLU_048577_4_0_6"/>
<dbReference type="OrthoDB" id="9781903at2"/>
<dbReference type="UniPathway" id="UPA00031">
    <property type="reaction ID" value="UER00010"/>
</dbReference>
<dbReference type="Proteomes" id="UP000002587">
    <property type="component" value="Chromosome"/>
</dbReference>
<dbReference type="GO" id="GO:0005737">
    <property type="term" value="C:cytoplasm"/>
    <property type="evidence" value="ECO:0007669"/>
    <property type="project" value="UniProtKB-SubCell"/>
</dbReference>
<dbReference type="GO" id="GO:0000107">
    <property type="term" value="F:imidazoleglycerol-phosphate synthase activity"/>
    <property type="evidence" value="ECO:0007669"/>
    <property type="project" value="UniProtKB-UniRule"/>
</dbReference>
<dbReference type="GO" id="GO:0016829">
    <property type="term" value="F:lyase activity"/>
    <property type="evidence" value="ECO:0007669"/>
    <property type="project" value="UniProtKB-KW"/>
</dbReference>
<dbReference type="GO" id="GO:0000105">
    <property type="term" value="P:L-histidine biosynthetic process"/>
    <property type="evidence" value="ECO:0007669"/>
    <property type="project" value="UniProtKB-UniRule"/>
</dbReference>
<dbReference type="CDD" id="cd04731">
    <property type="entry name" value="HisF"/>
    <property type="match status" value="1"/>
</dbReference>
<dbReference type="FunFam" id="3.20.20.70:FF:000006">
    <property type="entry name" value="Imidazole glycerol phosphate synthase subunit HisF"/>
    <property type="match status" value="1"/>
</dbReference>
<dbReference type="Gene3D" id="3.20.20.70">
    <property type="entry name" value="Aldolase class I"/>
    <property type="match status" value="1"/>
</dbReference>
<dbReference type="HAMAP" id="MF_01013">
    <property type="entry name" value="HisF"/>
    <property type="match status" value="1"/>
</dbReference>
<dbReference type="InterPro" id="IPR013785">
    <property type="entry name" value="Aldolase_TIM"/>
</dbReference>
<dbReference type="InterPro" id="IPR006062">
    <property type="entry name" value="His_biosynth"/>
</dbReference>
<dbReference type="InterPro" id="IPR004651">
    <property type="entry name" value="HisF"/>
</dbReference>
<dbReference type="InterPro" id="IPR050064">
    <property type="entry name" value="IGPS_HisA/HisF"/>
</dbReference>
<dbReference type="InterPro" id="IPR011060">
    <property type="entry name" value="RibuloseP-bd_barrel"/>
</dbReference>
<dbReference type="NCBIfam" id="TIGR00735">
    <property type="entry name" value="hisF"/>
    <property type="match status" value="1"/>
</dbReference>
<dbReference type="PANTHER" id="PTHR21235:SF2">
    <property type="entry name" value="IMIDAZOLE GLYCEROL PHOSPHATE SYNTHASE HISHF"/>
    <property type="match status" value="1"/>
</dbReference>
<dbReference type="PANTHER" id="PTHR21235">
    <property type="entry name" value="IMIDAZOLE GLYCEROL PHOSPHATE SYNTHASE SUBUNIT HISF/H IGP SYNTHASE SUBUNIT HISF/H"/>
    <property type="match status" value="1"/>
</dbReference>
<dbReference type="Pfam" id="PF00977">
    <property type="entry name" value="His_biosynth"/>
    <property type="match status" value="1"/>
</dbReference>
<dbReference type="SUPFAM" id="SSF51366">
    <property type="entry name" value="Ribulose-phoshate binding barrel"/>
    <property type="match status" value="1"/>
</dbReference>
<organism>
    <name type="scientific">Ruthia magnifica subsp. Calyptogena magnifica</name>
    <dbReference type="NCBI Taxonomy" id="413404"/>
    <lineage>
        <taxon>Bacteria</taxon>
        <taxon>Pseudomonadati</taxon>
        <taxon>Pseudomonadota</taxon>
        <taxon>Gammaproteobacteria</taxon>
        <taxon>Candidatus Pseudothioglobaceae</taxon>
        <taxon>Candidatus Ruthturnera</taxon>
    </lineage>
</organism>
<keyword id="KW-0028">Amino-acid biosynthesis</keyword>
<keyword id="KW-0963">Cytoplasm</keyword>
<keyword id="KW-0368">Histidine biosynthesis</keyword>
<keyword id="KW-0456">Lyase</keyword>
<name>HIS6_RUTMC</name>
<accession>A1AV74</accession>
<protein>
    <recommendedName>
        <fullName evidence="1">Imidazole glycerol phosphate synthase subunit HisF</fullName>
        <ecNumber evidence="1">4.3.2.10</ecNumber>
    </recommendedName>
    <alternativeName>
        <fullName evidence="1">IGP synthase cyclase subunit</fullName>
    </alternativeName>
    <alternativeName>
        <fullName evidence="1">IGP synthase subunit HisF</fullName>
    </alternativeName>
    <alternativeName>
        <fullName evidence="1">ImGP synthase subunit HisF</fullName>
        <shortName evidence="1">IGPS subunit HisF</shortName>
    </alternativeName>
</protein>
<proteinExistence type="inferred from homology"/>
<comment type="function">
    <text evidence="1">IGPS catalyzes the conversion of PRFAR and glutamine to IGP, AICAR and glutamate. The HisF subunit catalyzes the cyclization activity that produces IGP and AICAR from PRFAR using the ammonia provided by the HisH subunit.</text>
</comment>
<comment type="catalytic activity">
    <reaction evidence="1">
        <text>5-[(5-phospho-1-deoxy-D-ribulos-1-ylimino)methylamino]-1-(5-phospho-beta-D-ribosyl)imidazole-4-carboxamide + L-glutamine = D-erythro-1-(imidazol-4-yl)glycerol 3-phosphate + 5-amino-1-(5-phospho-beta-D-ribosyl)imidazole-4-carboxamide + L-glutamate + H(+)</text>
        <dbReference type="Rhea" id="RHEA:24793"/>
        <dbReference type="ChEBI" id="CHEBI:15378"/>
        <dbReference type="ChEBI" id="CHEBI:29985"/>
        <dbReference type="ChEBI" id="CHEBI:58278"/>
        <dbReference type="ChEBI" id="CHEBI:58359"/>
        <dbReference type="ChEBI" id="CHEBI:58475"/>
        <dbReference type="ChEBI" id="CHEBI:58525"/>
        <dbReference type="EC" id="4.3.2.10"/>
    </reaction>
</comment>
<comment type="pathway">
    <text evidence="1">Amino-acid biosynthesis; L-histidine biosynthesis; L-histidine from 5-phospho-alpha-D-ribose 1-diphosphate: step 5/9.</text>
</comment>
<comment type="subunit">
    <text evidence="1">Heterodimer of HisH and HisF.</text>
</comment>
<comment type="subcellular location">
    <subcellularLocation>
        <location evidence="1">Cytoplasm</location>
    </subcellularLocation>
</comment>
<comment type="similarity">
    <text evidence="1">Belongs to the HisA/HisF family.</text>
</comment>
<feature type="chain" id="PRO_1000063137" description="Imidazole glycerol phosphate synthase subunit HisF">
    <location>
        <begin position="1"/>
        <end position="255"/>
    </location>
</feature>
<feature type="active site" evidence="1">
    <location>
        <position position="12"/>
    </location>
</feature>
<feature type="active site" evidence="1">
    <location>
        <position position="131"/>
    </location>
</feature>